<gene>
    <name type="primary">BFR2</name>
    <name type="ordered locus">CAGL0H01419g</name>
</gene>
<protein>
    <recommendedName>
        <fullName>Protein BFR2</fullName>
    </recommendedName>
</protein>
<organism>
    <name type="scientific">Candida glabrata (strain ATCC 2001 / BCRC 20586 / JCM 3761 / NBRC 0622 / NRRL Y-65 / CBS 138)</name>
    <name type="common">Yeast</name>
    <name type="synonym">Nakaseomyces glabratus</name>
    <dbReference type="NCBI Taxonomy" id="284593"/>
    <lineage>
        <taxon>Eukaryota</taxon>
        <taxon>Fungi</taxon>
        <taxon>Dikarya</taxon>
        <taxon>Ascomycota</taxon>
        <taxon>Saccharomycotina</taxon>
        <taxon>Saccharomycetes</taxon>
        <taxon>Saccharomycetales</taxon>
        <taxon>Saccharomycetaceae</taxon>
        <taxon>Nakaseomyces</taxon>
    </lineage>
</organism>
<name>BFR2_CANGA</name>
<proteinExistence type="inferred from homology"/>
<accession>Q6FSD4</accession>
<dbReference type="EMBL" id="CR380954">
    <property type="protein sequence ID" value="CAG59793.1"/>
    <property type="molecule type" value="Genomic_DNA"/>
</dbReference>
<dbReference type="RefSeq" id="XP_446860.1">
    <property type="nucleotide sequence ID" value="XM_446860.1"/>
</dbReference>
<dbReference type="SMR" id="Q6FSD4"/>
<dbReference type="FunCoup" id="Q6FSD4">
    <property type="interactions" value="1017"/>
</dbReference>
<dbReference type="STRING" id="284593.Q6FSD4"/>
<dbReference type="EnsemblFungi" id="CAGL0H01419g-T">
    <property type="protein sequence ID" value="CAGL0H01419g-T-p1"/>
    <property type="gene ID" value="CAGL0H01419g"/>
</dbReference>
<dbReference type="KEGG" id="cgr:2888544"/>
<dbReference type="CGD" id="CAL0130530">
    <property type="gene designation" value="CAGL0H01419g"/>
</dbReference>
<dbReference type="VEuPathDB" id="FungiDB:CAGL0H01419g"/>
<dbReference type="eggNOG" id="KOG2773">
    <property type="taxonomic scope" value="Eukaryota"/>
</dbReference>
<dbReference type="HOGENOM" id="CLU_018299_2_2_1"/>
<dbReference type="InParanoid" id="Q6FSD4"/>
<dbReference type="OMA" id="INFMAPN"/>
<dbReference type="Proteomes" id="UP000002428">
    <property type="component" value="Chromosome H"/>
</dbReference>
<dbReference type="GO" id="GO:0005730">
    <property type="term" value="C:nucleolus"/>
    <property type="evidence" value="ECO:0007669"/>
    <property type="project" value="UniProtKB-SubCell"/>
</dbReference>
<dbReference type="GO" id="GO:0032040">
    <property type="term" value="C:small-subunit processome"/>
    <property type="evidence" value="ECO:0007669"/>
    <property type="project" value="EnsemblFungi"/>
</dbReference>
<dbReference type="GO" id="GO:0000462">
    <property type="term" value="P:maturation of SSU-rRNA from tricistronic rRNA transcript (SSU-rRNA, 5.8S rRNA, LSU-rRNA)"/>
    <property type="evidence" value="ECO:0007669"/>
    <property type="project" value="EnsemblFungi"/>
</dbReference>
<dbReference type="InterPro" id="IPR025160">
    <property type="entry name" value="AATF"/>
</dbReference>
<dbReference type="InterPro" id="IPR039223">
    <property type="entry name" value="AATF/Bfr2"/>
</dbReference>
<dbReference type="InterPro" id="IPR012617">
    <property type="entry name" value="AATF_C"/>
</dbReference>
<dbReference type="PANTHER" id="PTHR15565">
    <property type="entry name" value="AATF PROTEIN APOPTOSIS ANTAGONIZING TRANSCRIPTION FACTOR"/>
    <property type="match status" value="1"/>
</dbReference>
<dbReference type="PANTHER" id="PTHR15565:SF0">
    <property type="entry name" value="PROTEIN AATF"/>
    <property type="match status" value="1"/>
</dbReference>
<dbReference type="Pfam" id="PF13339">
    <property type="entry name" value="AATF-Che1"/>
    <property type="match status" value="1"/>
</dbReference>
<dbReference type="Pfam" id="PF08164">
    <property type="entry name" value="TRAUB"/>
    <property type="match status" value="1"/>
</dbReference>
<keyword id="KW-0175">Coiled coil</keyword>
<keyword id="KW-0539">Nucleus</keyword>
<keyword id="KW-1185">Reference proteome</keyword>
<reference key="1">
    <citation type="journal article" date="2004" name="Nature">
        <title>Genome evolution in yeasts.</title>
        <authorList>
            <person name="Dujon B."/>
            <person name="Sherman D."/>
            <person name="Fischer G."/>
            <person name="Durrens P."/>
            <person name="Casaregola S."/>
            <person name="Lafontaine I."/>
            <person name="de Montigny J."/>
            <person name="Marck C."/>
            <person name="Neuveglise C."/>
            <person name="Talla E."/>
            <person name="Goffard N."/>
            <person name="Frangeul L."/>
            <person name="Aigle M."/>
            <person name="Anthouard V."/>
            <person name="Babour A."/>
            <person name="Barbe V."/>
            <person name="Barnay S."/>
            <person name="Blanchin S."/>
            <person name="Beckerich J.-M."/>
            <person name="Beyne E."/>
            <person name="Bleykasten C."/>
            <person name="Boisrame A."/>
            <person name="Boyer J."/>
            <person name="Cattolico L."/>
            <person name="Confanioleri F."/>
            <person name="de Daruvar A."/>
            <person name="Despons L."/>
            <person name="Fabre E."/>
            <person name="Fairhead C."/>
            <person name="Ferry-Dumazet H."/>
            <person name="Groppi A."/>
            <person name="Hantraye F."/>
            <person name="Hennequin C."/>
            <person name="Jauniaux N."/>
            <person name="Joyet P."/>
            <person name="Kachouri R."/>
            <person name="Kerrest A."/>
            <person name="Koszul R."/>
            <person name="Lemaire M."/>
            <person name="Lesur I."/>
            <person name="Ma L."/>
            <person name="Muller H."/>
            <person name="Nicaud J.-M."/>
            <person name="Nikolski M."/>
            <person name="Oztas S."/>
            <person name="Ozier-Kalogeropoulos O."/>
            <person name="Pellenz S."/>
            <person name="Potier S."/>
            <person name="Richard G.-F."/>
            <person name="Straub M.-L."/>
            <person name="Suleau A."/>
            <person name="Swennen D."/>
            <person name="Tekaia F."/>
            <person name="Wesolowski-Louvel M."/>
            <person name="Westhof E."/>
            <person name="Wirth B."/>
            <person name="Zeniou-Meyer M."/>
            <person name="Zivanovic Y."/>
            <person name="Bolotin-Fukuhara M."/>
            <person name="Thierry A."/>
            <person name="Bouchier C."/>
            <person name="Caudron B."/>
            <person name="Scarpelli C."/>
            <person name="Gaillardin C."/>
            <person name="Weissenbach J."/>
            <person name="Wincker P."/>
            <person name="Souciet J.-L."/>
        </authorList>
    </citation>
    <scope>NUCLEOTIDE SEQUENCE [LARGE SCALE GENOMIC DNA]</scope>
    <source>
        <strain>ATCC 2001 / BCRC 20586 / JCM 3761 / NBRC 0622 / NRRL Y-65 / CBS 138</strain>
    </source>
</reference>
<comment type="subcellular location">
    <subcellularLocation>
        <location evidence="1">Nucleus</location>
        <location evidence="1">Nucleolus</location>
    </subcellularLocation>
</comment>
<comment type="similarity">
    <text evidence="4">Belongs to the AATF family.</text>
</comment>
<feature type="chain" id="PRO_0000056624" description="Protein BFR2">
    <location>
        <begin position="1"/>
        <end position="522"/>
    </location>
</feature>
<feature type="region of interest" description="Disordered" evidence="3">
    <location>
        <begin position="26"/>
        <end position="145"/>
    </location>
</feature>
<feature type="region of interest" description="Disordered" evidence="3">
    <location>
        <begin position="356"/>
        <end position="385"/>
    </location>
</feature>
<feature type="region of interest" description="Disordered" evidence="3">
    <location>
        <begin position="496"/>
        <end position="522"/>
    </location>
</feature>
<feature type="coiled-coil region" evidence="2">
    <location>
        <begin position="205"/>
        <end position="282"/>
    </location>
</feature>
<feature type="compositionally biased region" description="Basic and acidic residues" evidence="3">
    <location>
        <begin position="26"/>
        <end position="35"/>
    </location>
</feature>
<feature type="compositionally biased region" description="Basic and acidic residues" evidence="3">
    <location>
        <begin position="58"/>
        <end position="75"/>
    </location>
</feature>
<feature type="compositionally biased region" description="Acidic residues" evidence="3">
    <location>
        <begin position="100"/>
        <end position="110"/>
    </location>
</feature>
<feature type="compositionally biased region" description="Acidic residues" evidence="3">
    <location>
        <begin position="118"/>
        <end position="133"/>
    </location>
</feature>
<feature type="compositionally biased region" description="Basic and acidic residues" evidence="3">
    <location>
        <begin position="376"/>
        <end position="385"/>
    </location>
</feature>
<feature type="compositionally biased region" description="Acidic residues" evidence="3">
    <location>
        <begin position="496"/>
        <end position="511"/>
    </location>
</feature>
<feature type="compositionally biased region" description="Basic and acidic residues" evidence="3">
    <location>
        <begin position="512"/>
        <end position="522"/>
    </location>
</feature>
<sequence length="522" mass="58263">MGKLLADKLGKLANKPVVGDVDIEDDRVFEHRESGSDSDMDSGDEELKKAHYAQVGESKLRKQLDSEKNLQELDTKYVGSVGSREDIYGENASSGSDSGSDSELEDDESDAPANDLQSNDESESVESESEESDHESGSESDNGEVLRKIVEKETRQAMNRISDLTKRDASKGYSILSQNKFFENILDTRIKLQKAMNSANVLPVTKASWKLELKEDSENKKLLEENLSMVENLLNRVINFRIDIQAKEGISTDSKLETSKKRDITDLNESTDALDKDLKKYRTAVLQKWSAKVSSASGSSAMKSSKFKAVNQSADAQVENQLADTPRLIKRTCLNRRNVLPINFTEDMEQGRLTKFESTSNTGENNDEDENADIPKNYDPRRKDNNAIDISTNPYIFDDGDFYRVLLNDLIDKKTSSANLGVTSSATNSAIIVSKSNYKLKKNVDTKASKGRKLNYSIQEPIANYEAPVSSGYKWSDEQIDEFFAGLLGQKINFNEDSEQDSESDVGDEEEAIKNDDIQIFA</sequence>
<evidence type="ECO:0000250" key="1"/>
<evidence type="ECO:0000255" key="2"/>
<evidence type="ECO:0000256" key="3">
    <source>
        <dbReference type="SAM" id="MobiDB-lite"/>
    </source>
</evidence>
<evidence type="ECO:0000305" key="4"/>